<protein>
    <recommendedName>
        <fullName evidence="20">Voltage-gated delayed rectifier potassium channel KCNH5</fullName>
    </recommendedName>
    <alternativeName>
        <fullName>Ether-a-go-go potassium channel 2</fullName>
        <shortName evidence="18">hEAG2</shortName>
    </alternativeName>
    <alternativeName>
        <fullName>Potassium voltage-gated channel subfamily H member 5</fullName>
    </alternativeName>
    <alternativeName>
        <fullName>Voltage-gated potassium channel subunit Kv10.2</fullName>
    </alternativeName>
</protein>
<feature type="chain" id="PRO_0000054010" description="Voltage-gated delayed rectifier potassium channel KCNH5">
    <location>
        <begin position="1"/>
        <end position="988"/>
    </location>
</feature>
<feature type="topological domain" description="Cytoplasmic" evidence="3">
    <location>
        <begin position="1"/>
        <end position="217"/>
    </location>
</feature>
<feature type="transmembrane region" description="Helical; Name=Segment S1" evidence="3">
    <location>
        <begin position="218"/>
        <end position="238"/>
    </location>
</feature>
<feature type="topological domain" description="Extracellular" evidence="3">
    <location>
        <begin position="239"/>
        <end position="243"/>
    </location>
</feature>
<feature type="transmembrane region" description="Helical; Name=Segment S2" evidence="3">
    <location>
        <begin position="244"/>
        <end position="264"/>
    </location>
</feature>
<feature type="topological domain" description="Cytoplasmic" evidence="3">
    <location>
        <begin position="265"/>
        <end position="291"/>
    </location>
</feature>
<feature type="transmembrane region" description="Helical; Name=Segment S3" evidence="3">
    <location>
        <begin position="292"/>
        <end position="312"/>
    </location>
</feature>
<feature type="topological domain" description="Extracellular" evidence="3">
    <location>
        <begin position="313"/>
        <end position="319"/>
    </location>
</feature>
<feature type="transmembrane region" description="Helical; Voltage-sensor; Name=Segment S4" evidence="3">
    <location>
        <begin position="320"/>
        <end position="340"/>
    </location>
</feature>
<feature type="topological domain" description="Cytoplasmic" evidence="3">
    <location>
        <begin position="341"/>
        <end position="346"/>
    </location>
</feature>
<feature type="transmembrane region" description="Helical; Name=Segment S5" evidence="3">
    <location>
        <begin position="347"/>
        <end position="367"/>
    </location>
</feature>
<feature type="topological domain" description="Extracellular" evidence="3">
    <location>
        <begin position="368"/>
        <end position="419"/>
    </location>
</feature>
<feature type="intramembrane region" description="Pore-forming; Name=Segment H5" evidence="3">
    <location>
        <begin position="420"/>
        <end position="440"/>
    </location>
</feature>
<feature type="topological domain" description="Extracellular" evidence="3">
    <location>
        <begin position="441"/>
        <end position="446"/>
    </location>
</feature>
<feature type="transmembrane region" description="Helical; Name=Segment S6" evidence="3">
    <location>
        <begin position="447"/>
        <end position="467"/>
    </location>
</feature>
<feature type="topological domain" description="Cytoplasmic" evidence="3">
    <location>
        <begin position="468"/>
        <end position="988"/>
    </location>
</feature>
<feature type="domain" description="PAS">
    <location>
        <begin position="12"/>
        <end position="90"/>
    </location>
</feature>
<feature type="domain" description="PAC" evidence="4">
    <location>
        <begin position="91"/>
        <end position="143"/>
    </location>
</feature>
<feature type="region of interest" description="Calmodulin-binding" evidence="3">
    <location>
        <begin position="704"/>
        <end position="715"/>
    </location>
</feature>
<feature type="region of interest" description="Disordered" evidence="5">
    <location>
        <begin position="717"/>
        <end position="742"/>
    </location>
</feature>
<feature type="region of interest" description="Disordered" evidence="5">
    <location>
        <begin position="838"/>
        <end position="890"/>
    </location>
</feature>
<feature type="region of interest" description="CAD (involved in subunit assembly)" evidence="1">
    <location>
        <begin position="909"/>
        <end position="948"/>
    </location>
</feature>
<feature type="region of interest" description="Disordered" evidence="5">
    <location>
        <begin position="969"/>
        <end position="988"/>
    </location>
</feature>
<feature type="short sequence motif" description="Selectivity filter" evidence="1">
    <location>
        <begin position="432"/>
        <end position="437"/>
    </location>
</feature>
<feature type="compositionally biased region" description="Polar residues" evidence="5">
    <location>
        <begin position="721"/>
        <end position="742"/>
    </location>
</feature>
<feature type="compositionally biased region" description="Basic and acidic residues" evidence="5">
    <location>
        <begin position="871"/>
        <end position="885"/>
    </location>
</feature>
<feature type="compositionally biased region" description="Basic and acidic residues" evidence="5">
    <location>
        <begin position="977"/>
        <end position="988"/>
    </location>
</feature>
<feature type="binding site">
    <location>
        <begin position="550"/>
        <end position="667"/>
    </location>
    <ligand>
        <name>a nucleoside 3',5'-cyclic phosphate</name>
        <dbReference type="ChEBI" id="CHEBI:58464"/>
    </ligand>
</feature>
<feature type="modified residue" description="Phosphoserine" evidence="2">
    <location>
        <position position="883"/>
    </location>
</feature>
<feature type="glycosylation site" description="N-linked (GlcNAc...) asparagine" evidence="3">
    <location>
        <position position="403"/>
    </location>
</feature>
<feature type="cross-link" description="Glycyl lysine isopeptide (Lys-Gly) (interchain with G-Cter in ubiquitin)" evidence="9">
    <location>
        <position position="785"/>
    </location>
</feature>
<feature type="splice variant" id="VSP_000972" description="In isoform 3." evidence="19">
    <location>
        <begin position="1"/>
        <end position="58"/>
    </location>
</feature>
<feature type="splice variant" id="VSP_000973" description="In isoform 2." evidence="18">
    <original>GKGD</original>
    <variation>DHLS</variation>
    <location>
        <begin position="608"/>
        <end position="611"/>
    </location>
</feature>
<feature type="splice variant" id="VSP_000974" description="In isoform 2." evidence="18">
    <location>
        <begin position="612"/>
        <end position="988"/>
    </location>
</feature>
<feature type="splice variant" id="VSP_000975" description="In isoform 3." evidence="19">
    <original>IIFRKISDV</original>
    <variation>GWFSMANAL</variation>
    <location>
        <begin position="674"/>
        <end position="682"/>
    </location>
</feature>
<feature type="splice variant" id="VSP_000976" description="In isoform 3." evidence="19">
    <location>
        <begin position="683"/>
        <end position="988"/>
    </location>
</feature>
<feature type="sequence variant" id="VAR_089152" description="In DEE112; uncertain significance." evidence="14">
    <original>S</original>
    <variation>N</variation>
    <location>
        <position position="321"/>
    </location>
</feature>
<feature type="sequence variant" id="VAR_089153" description="In DEE112; uncertain significance." evidence="15">
    <original>K</original>
    <variation>E</variation>
    <location>
        <position position="324"/>
    </location>
</feature>
<feature type="sequence variant" id="VAR_077834" description="In DEE112; pathogenic; causes a hyperpolarizing shift in the voltage-gated potassium channel activity and an acceleration of activation; weakens the ionic interaction between residue 327 and negatively charged residues of helix S1-S3 thus favoring channel opening; dbSNP:rs587777164." evidence="10 11 12 14 15">
    <original>R</original>
    <variation>H</variation>
    <location>
        <position position="327"/>
    </location>
</feature>
<feature type="sequence variant" id="VAR_089154" description="In DEE112; likely pathogenic; dbSNP:rs1383017734." evidence="15">
    <original>R</original>
    <variation>H</variation>
    <location>
        <position position="333"/>
    </location>
</feature>
<feature type="sequence variant" id="VAR_089155" description="In DEE112; uncertain significance." evidence="13">
    <original>I</original>
    <variation>T</variation>
    <location>
        <position position="463"/>
    </location>
</feature>
<feature type="sequence variant" id="VAR_089156" description="In DEE112; uncertain significance." evidence="15">
    <original>T</original>
    <variation>P</variation>
    <location>
        <position position="468"/>
    </location>
</feature>
<feature type="sequence variant" id="VAR_089157" description="In DEE112; uncertain significance." evidence="15">
    <original>F</original>
    <variation>S</variation>
    <location>
        <position position="471"/>
    </location>
</feature>
<feature type="sequence variant" id="VAR_065162" description="In dbSNP:rs4902176." evidence="6 7 8">
    <original>A</original>
    <variation>T</variation>
    <location>
        <position position="745"/>
    </location>
</feature>
<feature type="mutagenesis site" description="Left-shifts the half-activation membrane potential." evidence="16">
    <original>K</original>
    <variation>A</variation>
    <location>
        <position position="337"/>
    </location>
</feature>
<feature type="mutagenesis site" description="Reduces the delayed rectifier potassium channel activity. Has little effect on the voltage sensitivity." evidence="16">
    <original>T</original>
    <variation>A</variation>
    <location>
        <position position="468"/>
    </location>
</feature>
<feature type="mutagenesis site" description="Almost loss of the delayed rectifier potassium channel activity. Has little effect on the voltage sensitivity." evidence="16">
    <original>Q</original>
    <variation>A</variation>
    <location>
        <position position="472"/>
    </location>
</feature>
<feature type="helix" evidence="28">
    <location>
        <begin position="16"/>
        <end position="23"/>
    </location>
</feature>
<feature type="strand" evidence="28">
    <location>
        <begin position="31"/>
        <end position="35"/>
    </location>
</feature>
<feature type="turn" evidence="31">
    <location>
        <begin position="44"/>
        <end position="46"/>
    </location>
</feature>
<feature type="helix" evidence="28">
    <location>
        <begin position="47"/>
        <end position="50"/>
    </location>
</feature>
<feature type="turn" evidence="29">
    <location>
        <begin position="55"/>
        <end position="57"/>
    </location>
</feature>
<feature type="helix" evidence="28">
    <location>
        <begin position="66"/>
        <end position="68"/>
    </location>
</feature>
<feature type="strand" evidence="30">
    <location>
        <begin position="71"/>
        <end position="73"/>
    </location>
</feature>
<feature type="helix" evidence="28">
    <location>
        <begin position="75"/>
        <end position="86"/>
    </location>
</feature>
<feature type="strand" evidence="28">
    <location>
        <begin position="93"/>
        <end position="98"/>
    </location>
</feature>
<feature type="strand" evidence="28">
    <location>
        <begin position="104"/>
        <end position="109"/>
    </location>
</feature>
<feature type="strand" evidence="28">
    <location>
        <begin position="112"/>
        <end position="115"/>
    </location>
</feature>
<feature type="strand" evidence="30">
    <location>
        <begin position="117"/>
        <end position="119"/>
    </location>
</feature>
<feature type="strand" evidence="28">
    <location>
        <begin position="121"/>
        <end position="125"/>
    </location>
</feature>
<feature type="strand" evidence="31">
    <location>
        <begin position="132"/>
        <end position="135"/>
    </location>
</feature>
<feature type="helix" evidence="28">
    <location>
        <begin position="147"/>
        <end position="155"/>
    </location>
</feature>
<feature type="turn" evidence="28">
    <location>
        <begin position="158"/>
        <end position="163"/>
    </location>
</feature>
<feature type="helix" evidence="28">
    <location>
        <begin position="173"/>
        <end position="185"/>
    </location>
</feature>
<feature type="turn" evidence="28">
    <location>
        <begin position="188"/>
        <end position="191"/>
    </location>
</feature>
<feature type="strand" evidence="31">
    <location>
        <begin position="194"/>
        <end position="196"/>
    </location>
</feature>
<feature type="strand" evidence="30">
    <location>
        <begin position="209"/>
        <end position="211"/>
    </location>
</feature>
<feature type="helix" evidence="28">
    <location>
        <begin position="212"/>
        <end position="237"/>
    </location>
</feature>
<feature type="turn" evidence="28">
    <location>
        <begin position="246"/>
        <end position="248"/>
    </location>
</feature>
<feature type="helix" evidence="28">
    <location>
        <begin position="249"/>
        <end position="264"/>
    </location>
</feature>
<feature type="helix" evidence="28">
    <location>
        <begin position="265"/>
        <end position="267"/>
    </location>
</feature>
<feature type="strand" evidence="28">
    <location>
        <begin position="273"/>
        <end position="275"/>
    </location>
</feature>
<feature type="helix" evidence="28">
    <location>
        <begin position="281"/>
        <end position="292"/>
    </location>
</feature>
<feature type="helix" evidence="28">
    <location>
        <begin position="295"/>
        <end position="299"/>
    </location>
</feature>
<feature type="helix" evidence="28">
    <location>
        <begin position="321"/>
        <end position="325"/>
    </location>
</feature>
<feature type="helix" evidence="28">
    <location>
        <begin position="326"/>
        <end position="330"/>
    </location>
</feature>
<feature type="helix" evidence="28">
    <location>
        <begin position="331"/>
        <end position="337"/>
    </location>
</feature>
<feature type="turn" evidence="31">
    <location>
        <begin position="338"/>
        <end position="340"/>
    </location>
</feature>
<feature type="helix" evidence="28">
    <location>
        <begin position="341"/>
        <end position="343"/>
    </location>
</feature>
<feature type="helix" evidence="28">
    <location>
        <begin position="346"/>
        <end position="374"/>
    </location>
</feature>
<feature type="strand" evidence="28">
    <location>
        <begin position="375"/>
        <end position="377"/>
    </location>
</feature>
<feature type="turn" evidence="28">
    <location>
        <begin position="378"/>
        <end position="381"/>
    </location>
</feature>
<feature type="strand" evidence="28">
    <location>
        <begin position="385"/>
        <end position="387"/>
    </location>
</feature>
<feature type="helix" evidence="28">
    <location>
        <begin position="388"/>
        <end position="396"/>
    </location>
</feature>
<feature type="strand" evidence="28">
    <location>
        <begin position="411"/>
        <end position="413"/>
    </location>
</feature>
<feature type="helix" evidence="28">
    <location>
        <begin position="415"/>
        <end position="428"/>
    </location>
</feature>
<feature type="turn" evidence="28">
    <location>
        <begin position="429"/>
        <end position="432"/>
    </location>
</feature>
<feature type="strand" evidence="28">
    <location>
        <begin position="436"/>
        <end position="438"/>
    </location>
</feature>
<feature type="helix" evidence="28">
    <location>
        <begin position="443"/>
        <end position="494"/>
    </location>
</feature>
<feature type="turn" evidence="28">
    <location>
        <begin position="499"/>
        <end position="501"/>
    </location>
</feature>
<feature type="helix" evidence="28">
    <location>
        <begin position="502"/>
        <end position="516"/>
    </location>
</feature>
<feature type="helix" evidence="28">
    <location>
        <begin position="521"/>
        <end position="526"/>
    </location>
</feature>
<feature type="helix" evidence="28">
    <location>
        <begin position="532"/>
        <end position="540"/>
    </location>
</feature>
<feature type="helix" evidence="28">
    <location>
        <begin position="542"/>
        <end position="545"/>
    </location>
</feature>
<feature type="helix" evidence="30">
    <location>
        <begin position="549"/>
        <end position="551"/>
    </location>
</feature>
<feature type="helix" evidence="28">
    <location>
        <begin position="556"/>
        <end position="565"/>
    </location>
</feature>
<feature type="strand" evidence="28">
    <location>
        <begin position="568"/>
        <end position="570"/>
    </location>
</feature>
<feature type="strand" evidence="28">
    <location>
        <begin position="576"/>
        <end position="578"/>
    </location>
</feature>
<feature type="strand" evidence="28">
    <location>
        <begin position="586"/>
        <end position="593"/>
    </location>
</feature>
<feature type="strand" evidence="28">
    <location>
        <begin position="595"/>
        <end position="607"/>
    </location>
</feature>
<feature type="strand" evidence="28">
    <location>
        <begin position="612"/>
        <end position="614"/>
    </location>
</feature>
<feature type="helix" evidence="28">
    <location>
        <begin position="617"/>
        <end position="619"/>
    </location>
</feature>
<feature type="strand" evidence="28">
    <location>
        <begin position="628"/>
        <end position="635"/>
    </location>
</feature>
<feature type="strand" evidence="28">
    <location>
        <begin position="637"/>
        <end position="642"/>
    </location>
</feature>
<feature type="helix" evidence="28">
    <location>
        <begin position="643"/>
        <end position="652"/>
    </location>
</feature>
<feature type="helix" evidence="28">
    <location>
        <begin position="655"/>
        <end position="663"/>
    </location>
</feature>
<feature type="strand" evidence="28">
    <location>
        <begin position="667"/>
        <end position="669"/>
    </location>
</feature>
<feature type="helix" evidence="28">
    <location>
        <begin position="679"/>
        <end position="691"/>
    </location>
</feature>
<sequence>MPGGKRGLVAPQNTFLENIVRRSSESSFLLGNAQIVDWPVVYSNDGFCKLSGYHRADVMQKSSTCSFMYGELTDKKTIEKVRQTFDNYESNCFEVLLYKKNRTPVWFYMQIAPIRNEHEKVVLFLCTFKDITLFKQPIEDDSTKGWTKFARLTRALTNSRSVLQQLTPMNKTEVVHKHSRLAEVLQLGSDILPQYKQEAPKTPPHIILHYCAFKTTWDWVILILTFYTAIMVPYNVSFKTKQNNIAWLVLDSVVDVIFLVDIVLNFHTTFVGPGGEVISDPKLIRMNYLKTWFVIDLLSCLPYDIINAFENVDEGISSLFSSLKVVRLLRLGRVARKLDHYLEYGAAVLVLLVCVFGLVAHWLACIWYSIGDYEVIDEVTNTIQIDSWLYQLALSIGTPYRYNTSAGIWEGGPSKDSLYVSSLYFTMTSLTTIGFGNIAPTTDVEKMFSVAMMMVGSLLYATIFGNVTTIFQQMYANTNRYHEMLNNVRDFLKLYQVPKGLSERVMDYIVSTWSMSKGIDTEKVLSICPKDMRADICVHLNRKVFNEHPAFRLASDGCLRALAVEFQTIHCAPGDLIYHAGESVDALCFVVSGSLEVIQDDEVVAILGKGDVFGDIFWKETTLAHACANVRALTYCDLHIIKREALLKVLDFYTAFANSFSRNLTLTCNLRKRIIFRKISDVKKEEEERLRQKNEVTLSIPVDHPVRKLFQKFKQQKELRNQGSTQGDPERNQLQVESRSLQNGASITGTSVVTVSQITPIQTSLAYVKTSESLKQNNRDAMELKPNGGADQKCLKVNSPIRMKNGNGKGWLRLKNNMGAHEEKKEDWNNVTKAESMGLLSEDPKSSDSENSVTKNPLRKTDSCDSGITKSDLRLDKAGEARSPLEHSPIQADAKHPFYPIPEQALQTTLQEVKHELKEDIQLLSCRMTALEKQVAEILKILSEKSVPQASSPKSQMPLQVPPQIPCQDIFSVSRPESPESDKDEIHF</sequence>
<accession>Q8NCM2</accession>
<accession>C9JP98</accession>
<comment type="function">
    <text evidence="6 7 11 16">Pore-forming (alpha) subunit of a voltage-gated delayed rectifier potassium channel that mediates outward-rectifying potassium currents which, on depolarization, reaches a steady-state level and do not inactivate (PubMed:11943152, PubMed:12135768, PubMed:24133262, PubMed:36928654). The kinetic is characterized by a slow activation time course and a small voltage dependence of the activation time constants, therefore, starts to open at more negative voltages (PubMed:11943152, PubMed:12135768). The activation kinetics depend on the prepulse potential and external divalent cation concentration (PubMed:11943152, PubMed:24133262). The time course of activation is biphasic with a fast and a slowly activating current component (PubMed:11943152, PubMed:12135768, PubMed:36928654). With negative prepulses, the current activation is delayed and slowed down several fold, whereas more positive prepulses speed up activation, therefore the activation rate depends on holding potential (PubMed:11943152, PubMed:12135768, PubMed:36928654).</text>
</comment>
<comment type="catalytic activity">
    <reaction evidence="6 7 11 16">
        <text>K(+)(in) = K(+)(out)</text>
        <dbReference type="Rhea" id="RHEA:29463"/>
        <dbReference type="ChEBI" id="CHEBI:29103"/>
    </reaction>
</comment>
<comment type="subunit">
    <text evidence="6 16">Homotetramer (PubMed:36928654). The potassium channel is probably composed of a homo- or heterotetrameric complex of pore-forming alpha subunits that can associate with modulating beta subunits. Heteromultimer with KCNH1/EAG (PubMed:11943152).</text>
</comment>
<comment type="subcellular location">
    <subcellularLocation>
        <location>Membrane</location>
        <topology>Multi-pass membrane protein</topology>
    </subcellularLocation>
</comment>
<comment type="alternative products">
    <event type="alternative splicing"/>
    <isoform>
        <id>Q8NCM2-1</id>
        <name>1</name>
        <sequence type="displayed"/>
    </isoform>
    <isoform>
        <id>Q8NCM2-2</id>
        <name>2</name>
        <name>2b</name>
        <sequence type="described" ref="VSP_000973 VSP_000974"/>
    </isoform>
    <isoform>
        <id>Q8NCM2-3</id>
        <name>3</name>
        <sequence type="described" ref="VSP_000972 VSP_000975 VSP_000976"/>
    </isoform>
    <text>Experimental confirmation may be lacking for some isoforms.</text>
</comment>
<comment type="tissue specificity">
    <text>Detected in brain, skeletal muscle, heart, placenta, lung and liver, and at low levels in kidney.</text>
</comment>
<comment type="domain">
    <text evidence="16">Contains a voltage sensor domain (VSD) formed from the S1-S4 transmembrane helices, a pore domain formed from the S5-pore loop-S6 domain and the C-terminal cyclic nucleotide binding homology domain (CNBHD).</text>
</comment>
<comment type="domain">
    <text>The segment S4 is probably the voltage-sensor and is characterized by a series of positively charged amino acids at every third position.</text>
</comment>
<comment type="disease" evidence="10 11 12 13 14 15">
    <disease id="DI-06775">
        <name>Developmental and epileptic encephalopathy 112</name>
        <acronym>DEE112</acronym>
        <description>A form of epileptic encephalopathy, a heterogeneous group of early-onset epilepsies characterized by refractory seizures, neurodevelopmental impairment, and poor prognosis. Development is normal prior to seizure onset, after which cognitive and motor delays become apparent. DEE112 is an autosomal dominant form characterized by onset in infancy, and a wide range of seizure types including focal and generalized seizures. Cognitive outcomes range from normal intellect to profound intellectual development impairment.</description>
        <dbReference type="MIM" id="620537"/>
    </disease>
    <text>The disease is caused by variants affecting the gene represented in this entry.</text>
</comment>
<comment type="similarity">
    <text evidence="20">Belongs to the potassium channel family. H (Eag) (TC 1.A.1.20) subfamily. Kv10.2/KCNH5 sub-subfamily.</text>
</comment>
<comment type="sequence caution" evidence="20">
    <conflict type="erroneous termination">
        <sequence resource="EMBL-CDS" id="BAC11016"/>
    </conflict>
    <text>Truncated C-terminus.</text>
</comment>
<name>KCNH5_HUMAN</name>
<dbReference type="EMBL" id="AF418206">
    <property type="protein sequence ID" value="AAM28435.1"/>
    <property type="molecule type" value="mRNA"/>
</dbReference>
<dbReference type="EMBL" id="AF472412">
    <property type="protein sequence ID" value="AAM49565.1"/>
    <property type="molecule type" value="mRNA"/>
</dbReference>
<dbReference type="EMBL" id="AF493798">
    <property type="protein sequence ID" value="AAM49574.1"/>
    <property type="molecule type" value="mRNA"/>
</dbReference>
<dbReference type="EMBL" id="AK074484">
    <property type="protein sequence ID" value="BAC11016.1"/>
    <property type="status" value="ALT_SEQ"/>
    <property type="molecule type" value="mRNA"/>
</dbReference>
<dbReference type="EMBL" id="AL109985">
    <property type="status" value="NOT_ANNOTATED_CDS"/>
    <property type="molecule type" value="Genomic_DNA"/>
</dbReference>
<dbReference type="EMBL" id="AL132666">
    <property type="status" value="NOT_ANNOTATED_CDS"/>
    <property type="molecule type" value="Genomic_DNA"/>
</dbReference>
<dbReference type="EMBL" id="AL137191">
    <property type="status" value="NOT_ANNOTATED_CDS"/>
    <property type="molecule type" value="Genomic_DNA"/>
</dbReference>
<dbReference type="EMBL" id="AL355101">
    <property type="status" value="NOT_ANNOTATED_CDS"/>
    <property type="molecule type" value="Genomic_DNA"/>
</dbReference>
<dbReference type="EMBL" id="CH471061">
    <property type="protein sequence ID" value="EAW80819.1"/>
    <property type="molecule type" value="Genomic_DNA"/>
</dbReference>
<dbReference type="EMBL" id="BC073979">
    <property type="protein sequence ID" value="AAH73979.1"/>
    <property type="molecule type" value="mRNA"/>
</dbReference>
<dbReference type="CCDS" id="CCDS45122.1">
    <molecule id="Q8NCM2-2"/>
</dbReference>
<dbReference type="CCDS" id="CCDS9756.1">
    <molecule id="Q8NCM2-1"/>
</dbReference>
<dbReference type="RefSeq" id="NP_647479.2">
    <molecule id="Q8NCM2-1"/>
    <property type="nucleotide sequence ID" value="NM_139318.4"/>
</dbReference>
<dbReference type="RefSeq" id="NP_758963.1">
    <molecule id="Q8NCM2-2"/>
    <property type="nucleotide sequence ID" value="NM_172375.3"/>
</dbReference>
<dbReference type="PDB" id="7YID">
    <property type="method" value="EM"/>
    <property type="resolution" value="3.40 A"/>
    <property type="chains" value="A/B/C/D=1-988"/>
</dbReference>
<dbReference type="PDB" id="7YIE">
    <property type="method" value="EM"/>
    <property type="resolution" value="3.40 A"/>
    <property type="chains" value="A/B/C/D=1-988"/>
</dbReference>
<dbReference type="PDB" id="7YIF">
    <property type="method" value="EM"/>
    <property type="resolution" value="3.50 A"/>
    <property type="chains" value="A/B/C/D=1-988"/>
</dbReference>
<dbReference type="PDB" id="7YIG">
    <property type="method" value="EM"/>
    <property type="resolution" value="3.60 A"/>
    <property type="chains" value="A/B/C/D=1-988"/>
</dbReference>
<dbReference type="PDB" id="7YIH">
    <property type="method" value="EM"/>
    <property type="resolution" value="3.50 A"/>
    <property type="chains" value="A/B/C/D=1-988"/>
</dbReference>
<dbReference type="PDB" id="7YIJ">
    <property type="method" value="EM"/>
    <property type="resolution" value="3.80 A"/>
    <property type="chains" value="A/B/C/D=1-988"/>
</dbReference>
<dbReference type="PDBsum" id="7YID"/>
<dbReference type="PDBsum" id="7YIE"/>
<dbReference type="PDBsum" id="7YIF"/>
<dbReference type="PDBsum" id="7YIG"/>
<dbReference type="PDBsum" id="7YIH"/>
<dbReference type="PDBsum" id="7YIJ"/>
<dbReference type="EMDB" id="EMD-33855"/>
<dbReference type="EMDB" id="EMD-33856"/>
<dbReference type="EMDB" id="EMD-33857"/>
<dbReference type="EMDB" id="EMD-33858"/>
<dbReference type="EMDB" id="EMD-33859"/>
<dbReference type="EMDB" id="EMD-33860"/>
<dbReference type="SMR" id="Q8NCM2"/>
<dbReference type="BioGRID" id="118024">
    <property type="interactions" value="9"/>
</dbReference>
<dbReference type="CORUM" id="Q8NCM2"/>
<dbReference type="FunCoup" id="Q8NCM2">
    <property type="interactions" value="444"/>
</dbReference>
<dbReference type="IntAct" id="Q8NCM2">
    <property type="interactions" value="2"/>
</dbReference>
<dbReference type="STRING" id="9606.ENSP00000321427"/>
<dbReference type="ChEMBL" id="CHEMBL2362996"/>
<dbReference type="DrugBank" id="DB00228">
    <property type="generic name" value="Enflurane"/>
</dbReference>
<dbReference type="DrugBank" id="DB01110">
    <property type="generic name" value="Miconazole"/>
</dbReference>
<dbReference type="DrugBank" id="DB01069">
    <property type="generic name" value="Promethazine"/>
</dbReference>
<dbReference type="DrugCentral" id="Q8NCM2"/>
<dbReference type="GuidetoPHARMACOLOGY" id="571"/>
<dbReference type="TCDB" id="1.A.1.20.9">
    <property type="family name" value="the voltage-gated ion channel (vic) superfamily"/>
</dbReference>
<dbReference type="GlyCosmos" id="Q8NCM2">
    <property type="glycosylation" value="1 site, No reported glycans"/>
</dbReference>
<dbReference type="GlyGen" id="Q8NCM2">
    <property type="glycosylation" value="2 sites, 1 O-linked glycan (1 site)"/>
</dbReference>
<dbReference type="iPTMnet" id="Q8NCM2"/>
<dbReference type="PhosphoSitePlus" id="Q8NCM2"/>
<dbReference type="BioMuta" id="KCNH5"/>
<dbReference type="DMDM" id="334302891"/>
<dbReference type="jPOST" id="Q8NCM2"/>
<dbReference type="MassIVE" id="Q8NCM2"/>
<dbReference type="PaxDb" id="9606-ENSP00000321427"/>
<dbReference type="PeptideAtlas" id="Q8NCM2"/>
<dbReference type="Antibodypedia" id="11594">
    <property type="antibodies" value="60 antibodies from 17 providers"/>
</dbReference>
<dbReference type="DNASU" id="27133"/>
<dbReference type="Ensembl" id="ENST00000322893.12">
    <molecule id="Q8NCM2-1"/>
    <property type="protein sequence ID" value="ENSP00000321427.7"/>
    <property type="gene ID" value="ENSG00000140015.20"/>
</dbReference>
<dbReference type="Ensembl" id="ENST00000394968.2">
    <molecule id="Q8NCM2-3"/>
    <property type="protein sequence ID" value="ENSP00000378419.1"/>
    <property type="gene ID" value="ENSG00000140015.20"/>
</dbReference>
<dbReference type="Ensembl" id="ENST00000420622.6">
    <molecule id="Q8NCM2-2"/>
    <property type="protein sequence ID" value="ENSP00000395439.2"/>
    <property type="gene ID" value="ENSG00000140015.20"/>
</dbReference>
<dbReference type="GeneID" id="27133"/>
<dbReference type="KEGG" id="hsa:27133"/>
<dbReference type="MANE-Select" id="ENST00000322893.12">
    <property type="protein sequence ID" value="ENSP00000321427.7"/>
    <property type="RefSeq nucleotide sequence ID" value="NM_139318.5"/>
    <property type="RefSeq protein sequence ID" value="NP_647479.2"/>
</dbReference>
<dbReference type="UCSC" id="uc001xfx.5">
    <molecule id="Q8NCM2-1"/>
    <property type="organism name" value="human"/>
</dbReference>
<dbReference type="AGR" id="HGNC:6254"/>
<dbReference type="CTD" id="27133"/>
<dbReference type="DisGeNET" id="27133"/>
<dbReference type="GeneCards" id="KCNH5"/>
<dbReference type="HGNC" id="HGNC:6254">
    <property type="gene designation" value="KCNH5"/>
</dbReference>
<dbReference type="HPA" id="ENSG00000140015">
    <property type="expression patterns" value="Tissue enhanced (brain, retina)"/>
</dbReference>
<dbReference type="MalaCards" id="KCNH5"/>
<dbReference type="MIM" id="605716">
    <property type="type" value="gene"/>
</dbReference>
<dbReference type="MIM" id="620537">
    <property type="type" value="phenotype"/>
</dbReference>
<dbReference type="neXtProt" id="NX_Q8NCM2"/>
<dbReference type="OpenTargets" id="ENSG00000140015"/>
<dbReference type="PharmGKB" id="PA30040"/>
<dbReference type="VEuPathDB" id="HostDB:ENSG00000140015"/>
<dbReference type="eggNOG" id="KOG0501">
    <property type="taxonomic scope" value="Eukaryota"/>
</dbReference>
<dbReference type="GeneTree" id="ENSGT00940000156540"/>
<dbReference type="HOGENOM" id="CLU_005746_3_1_1"/>
<dbReference type="InParanoid" id="Q8NCM2"/>
<dbReference type="OMA" id="YTSREMM"/>
<dbReference type="OrthoDB" id="447251at2759"/>
<dbReference type="PAN-GO" id="Q8NCM2">
    <property type="GO annotations" value="4 GO annotations based on evolutionary models"/>
</dbReference>
<dbReference type="PhylomeDB" id="Q8NCM2"/>
<dbReference type="TreeFam" id="TF313130"/>
<dbReference type="PathwayCommons" id="Q8NCM2"/>
<dbReference type="Reactome" id="R-HSA-1296072">
    <property type="pathway name" value="Voltage gated Potassium channels"/>
</dbReference>
<dbReference type="SignaLink" id="Q8NCM2"/>
<dbReference type="BioGRID-ORCS" id="27133">
    <property type="hits" value="23 hits in 1151 CRISPR screens"/>
</dbReference>
<dbReference type="ChiTaRS" id="KCNH5">
    <property type="organism name" value="human"/>
</dbReference>
<dbReference type="GeneWiki" id="KCNH5"/>
<dbReference type="GenomeRNAi" id="27133"/>
<dbReference type="Pharos" id="Q8NCM2">
    <property type="development level" value="Tclin"/>
</dbReference>
<dbReference type="PRO" id="PR:Q8NCM2"/>
<dbReference type="Proteomes" id="UP000005640">
    <property type="component" value="Chromosome 14"/>
</dbReference>
<dbReference type="RNAct" id="Q8NCM2">
    <property type="molecule type" value="protein"/>
</dbReference>
<dbReference type="Bgee" id="ENSG00000140015">
    <property type="expression patterns" value="Expressed in buccal mucosa cell and 61 other cell types or tissues"/>
</dbReference>
<dbReference type="GO" id="GO:0009986">
    <property type="term" value="C:cell surface"/>
    <property type="evidence" value="ECO:0000314"/>
    <property type="project" value="MGI"/>
</dbReference>
<dbReference type="GO" id="GO:0005886">
    <property type="term" value="C:plasma membrane"/>
    <property type="evidence" value="ECO:0000318"/>
    <property type="project" value="GO_Central"/>
</dbReference>
<dbReference type="GO" id="GO:0008076">
    <property type="term" value="C:voltage-gated potassium channel complex"/>
    <property type="evidence" value="ECO:0000314"/>
    <property type="project" value="UniProtKB"/>
</dbReference>
<dbReference type="GO" id="GO:0005516">
    <property type="term" value="F:calmodulin binding"/>
    <property type="evidence" value="ECO:0007669"/>
    <property type="project" value="UniProtKB-KW"/>
</dbReference>
<dbReference type="GO" id="GO:0005251">
    <property type="term" value="F:delayed rectifier potassium channel activity"/>
    <property type="evidence" value="ECO:0000314"/>
    <property type="project" value="UniProtKB"/>
</dbReference>
<dbReference type="GO" id="GO:0044877">
    <property type="term" value="F:protein-containing complex binding"/>
    <property type="evidence" value="ECO:0007669"/>
    <property type="project" value="Ensembl"/>
</dbReference>
<dbReference type="GO" id="GO:0044325">
    <property type="term" value="F:transmembrane transporter binding"/>
    <property type="evidence" value="ECO:0007669"/>
    <property type="project" value="Ensembl"/>
</dbReference>
<dbReference type="GO" id="GO:0005249">
    <property type="term" value="F:voltage-gated potassium channel activity"/>
    <property type="evidence" value="ECO:0000315"/>
    <property type="project" value="UniProtKB"/>
</dbReference>
<dbReference type="GO" id="GO:0071805">
    <property type="term" value="P:potassium ion transmembrane transport"/>
    <property type="evidence" value="ECO:0000318"/>
    <property type="project" value="GO_Central"/>
</dbReference>
<dbReference type="GO" id="GO:0006813">
    <property type="term" value="P:potassium ion transport"/>
    <property type="evidence" value="ECO:0000314"/>
    <property type="project" value="UniProtKB"/>
</dbReference>
<dbReference type="GO" id="GO:0010389">
    <property type="term" value="P:regulation of G2/M transition of mitotic cell cycle"/>
    <property type="evidence" value="ECO:0000314"/>
    <property type="project" value="MGI"/>
</dbReference>
<dbReference type="GO" id="GO:0042391">
    <property type="term" value="P:regulation of membrane potential"/>
    <property type="evidence" value="ECO:0000318"/>
    <property type="project" value="GO_Central"/>
</dbReference>
<dbReference type="CDD" id="cd00038">
    <property type="entry name" value="CAP_ED"/>
    <property type="match status" value="1"/>
</dbReference>
<dbReference type="CDD" id="cd00130">
    <property type="entry name" value="PAS"/>
    <property type="match status" value="1"/>
</dbReference>
<dbReference type="FunFam" id="1.10.1200.260:FF:000003">
    <property type="entry name" value="Potassium voltage-gated channel subfamily H member 1"/>
    <property type="match status" value="1"/>
</dbReference>
<dbReference type="FunFam" id="2.60.120.10:FF:000009">
    <property type="entry name" value="Potassium voltage-gated channel subfamily H member 1"/>
    <property type="match status" value="1"/>
</dbReference>
<dbReference type="FunFam" id="3.30.450.20:FF:000009">
    <property type="entry name" value="Potassium voltage-gated channel subfamily H member 1"/>
    <property type="match status" value="1"/>
</dbReference>
<dbReference type="FunFam" id="1.10.287.70:FF:000035">
    <property type="entry name" value="Potassium voltage-gated channel, subfamily H (Eag-related), member 1"/>
    <property type="match status" value="1"/>
</dbReference>
<dbReference type="Gene3D" id="1.10.1200.260">
    <property type="match status" value="1"/>
</dbReference>
<dbReference type="Gene3D" id="1.10.287.70">
    <property type="match status" value="1"/>
</dbReference>
<dbReference type="Gene3D" id="2.60.120.10">
    <property type="entry name" value="Jelly Rolls"/>
    <property type="match status" value="1"/>
</dbReference>
<dbReference type="Gene3D" id="3.30.450.20">
    <property type="entry name" value="PAS domain"/>
    <property type="match status" value="1"/>
</dbReference>
<dbReference type="InterPro" id="IPR000595">
    <property type="entry name" value="cNMP-bd_dom"/>
</dbReference>
<dbReference type="InterPro" id="IPR018490">
    <property type="entry name" value="cNMP-bd_dom_sf"/>
</dbReference>
<dbReference type="InterPro" id="IPR005821">
    <property type="entry name" value="Ion_trans_dom"/>
</dbReference>
<dbReference type="InterPro" id="IPR003949">
    <property type="entry name" value="K_chnl_volt-dep_EAG"/>
</dbReference>
<dbReference type="InterPro" id="IPR003938">
    <property type="entry name" value="K_chnl_volt-dep_EAG/ELK/ERG"/>
</dbReference>
<dbReference type="InterPro" id="IPR050818">
    <property type="entry name" value="KCNH_animal-type"/>
</dbReference>
<dbReference type="InterPro" id="IPR001610">
    <property type="entry name" value="PAC"/>
</dbReference>
<dbReference type="InterPro" id="IPR000014">
    <property type="entry name" value="PAS"/>
</dbReference>
<dbReference type="InterPro" id="IPR000700">
    <property type="entry name" value="PAS-assoc_C"/>
</dbReference>
<dbReference type="InterPro" id="IPR035965">
    <property type="entry name" value="PAS-like_dom_sf"/>
</dbReference>
<dbReference type="InterPro" id="IPR014710">
    <property type="entry name" value="RmlC-like_jellyroll"/>
</dbReference>
<dbReference type="NCBIfam" id="TIGR00229">
    <property type="entry name" value="sensory_box"/>
    <property type="match status" value="1"/>
</dbReference>
<dbReference type="PANTHER" id="PTHR10217:SF533">
    <property type="entry name" value="POTASSIUM VOLTAGE-GATED CHANNEL SUBFAMILY H MEMBER 5"/>
    <property type="match status" value="1"/>
</dbReference>
<dbReference type="PANTHER" id="PTHR10217">
    <property type="entry name" value="VOLTAGE AND LIGAND GATED POTASSIUM CHANNEL"/>
    <property type="match status" value="1"/>
</dbReference>
<dbReference type="Pfam" id="PF00027">
    <property type="entry name" value="cNMP_binding"/>
    <property type="match status" value="1"/>
</dbReference>
<dbReference type="Pfam" id="PF00520">
    <property type="entry name" value="Ion_trans"/>
    <property type="match status" value="1"/>
</dbReference>
<dbReference type="Pfam" id="PF13426">
    <property type="entry name" value="PAS_9"/>
    <property type="match status" value="1"/>
</dbReference>
<dbReference type="PRINTS" id="PR01463">
    <property type="entry name" value="EAGCHANLFMLY"/>
</dbReference>
<dbReference type="PRINTS" id="PR01464">
    <property type="entry name" value="EAGCHANNEL"/>
</dbReference>
<dbReference type="SMART" id="SM00100">
    <property type="entry name" value="cNMP"/>
    <property type="match status" value="1"/>
</dbReference>
<dbReference type="SMART" id="SM00086">
    <property type="entry name" value="PAC"/>
    <property type="match status" value="1"/>
</dbReference>
<dbReference type="SUPFAM" id="SSF51206">
    <property type="entry name" value="cAMP-binding domain-like"/>
    <property type="match status" value="1"/>
</dbReference>
<dbReference type="SUPFAM" id="SSF55785">
    <property type="entry name" value="PYP-like sensor domain (PAS domain)"/>
    <property type="match status" value="1"/>
</dbReference>
<dbReference type="SUPFAM" id="SSF81324">
    <property type="entry name" value="Voltage-gated potassium channels"/>
    <property type="match status" value="1"/>
</dbReference>
<dbReference type="PROSITE" id="PS50042">
    <property type="entry name" value="CNMP_BINDING_3"/>
    <property type="match status" value="1"/>
</dbReference>
<dbReference type="PROSITE" id="PS50113">
    <property type="entry name" value="PAC"/>
    <property type="match status" value="1"/>
</dbReference>
<reference key="1">
    <citation type="journal article" date="2002" name="FEBS Lett.">
        <title>Functional distinction of human EAG1 and EAG2 potassium channels.</title>
        <authorList>
            <person name="Schoenherr R."/>
            <person name="Gessner G."/>
            <person name="Loeber K."/>
            <person name="Heinemann S.H."/>
        </authorList>
    </citation>
    <scope>NUCLEOTIDE SEQUENCE [MRNA] (ISOFORM 1)</scope>
    <scope>FUNCTION</scope>
    <scope>TRANSPORTER ACTIVITY</scope>
    <scope>SUBUNIT</scope>
    <scope>VARIANT THR-745</scope>
    <source>
        <tissue>Brain</tissue>
    </source>
</reference>
<reference key="2">
    <citation type="journal article" date="2002" name="FEBS Lett.">
        <title>Molecular identification and characterisation of the human eag2 potassium channel.</title>
        <authorList>
            <person name="Ju M."/>
            <person name="Wray D."/>
        </authorList>
    </citation>
    <scope>NUCLEOTIDE SEQUENCE [MRNA] (ISOFORMS 1 AND 2)</scope>
    <scope>FUNCTION</scope>
    <scope>TRANSPORTER ACTIVITY</scope>
    <scope>VARIANT THR-745</scope>
    <source>
        <tissue>Fetal brain</tissue>
    </source>
</reference>
<reference key="3">
    <citation type="journal article" date="2004" name="Nat. Genet.">
        <title>Complete sequencing and characterization of 21,243 full-length human cDNAs.</title>
        <authorList>
            <person name="Ota T."/>
            <person name="Suzuki Y."/>
            <person name="Nishikawa T."/>
            <person name="Otsuki T."/>
            <person name="Sugiyama T."/>
            <person name="Irie R."/>
            <person name="Wakamatsu A."/>
            <person name="Hayashi K."/>
            <person name="Sato H."/>
            <person name="Nagai K."/>
            <person name="Kimura K."/>
            <person name="Makita H."/>
            <person name="Sekine M."/>
            <person name="Obayashi M."/>
            <person name="Nishi T."/>
            <person name="Shibahara T."/>
            <person name="Tanaka T."/>
            <person name="Ishii S."/>
            <person name="Yamamoto J."/>
            <person name="Saito K."/>
            <person name="Kawai Y."/>
            <person name="Isono Y."/>
            <person name="Nakamura Y."/>
            <person name="Nagahari K."/>
            <person name="Murakami K."/>
            <person name="Yasuda T."/>
            <person name="Iwayanagi T."/>
            <person name="Wagatsuma M."/>
            <person name="Shiratori A."/>
            <person name="Sudo H."/>
            <person name="Hosoiri T."/>
            <person name="Kaku Y."/>
            <person name="Kodaira H."/>
            <person name="Kondo H."/>
            <person name="Sugawara M."/>
            <person name="Takahashi M."/>
            <person name="Kanda K."/>
            <person name="Yokoi T."/>
            <person name="Furuya T."/>
            <person name="Kikkawa E."/>
            <person name="Omura Y."/>
            <person name="Abe K."/>
            <person name="Kamihara K."/>
            <person name="Katsuta N."/>
            <person name="Sato K."/>
            <person name="Tanikawa M."/>
            <person name="Yamazaki M."/>
            <person name="Ninomiya K."/>
            <person name="Ishibashi T."/>
            <person name="Yamashita H."/>
            <person name="Murakawa K."/>
            <person name="Fujimori K."/>
            <person name="Tanai H."/>
            <person name="Kimata M."/>
            <person name="Watanabe M."/>
            <person name="Hiraoka S."/>
            <person name="Chiba Y."/>
            <person name="Ishida S."/>
            <person name="Ono Y."/>
            <person name="Takiguchi S."/>
            <person name="Watanabe S."/>
            <person name="Yosida M."/>
            <person name="Hotuta T."/>
            <person name="Kusano J."/>
            <person name="Kanehori K."/>
            <person name="Takahashi-Fujii A."/>
            <person name="Hara H."/>
            <person name="Tanase T.-O."/>
            <person name="Nomura Y."/>
            <person name="Togiya S."/>
            <person name="Komai F."/>
            <person name="Hara R."/>
            <person name="Takeuchi K."/>
            <person name="Arita M."/>
            <person name="Imose N."/>
            <person name="Musashino K."/>
            <person name="Yuuki H."/>
            <person name="Oshima A."/>
            <person name="Sasaki N."/>
            <person name="Aotsuka S."/>
            <person name="Yoshikawa Y."/>
            <person name="Matsunawa H."/>
            <person name="Ichihara T."/>
            <person name="Shiohata N."/>
            <person name="Sano S."/>
            <person name="Moriya S."/>
            <person name="Momiyama H."/>
            <person name="Satoh N."/>
            <person name="Takami S."/>
            <person name="Terashima Y."/>
            <person name="Suzuki O."/>
            <person name="Nakagawa S."/>
            <person name="Senoh A."/>
            <person name="Mizoguchi H."/>
            <person name="Goto Y."/>
            <person name="Shimizu F."/>
            <person name="Wakebe H."/>
            <person name="Hishigaki H."/>
            <person name="Watanabe T."/>
            <person name="Sugiyama A."/>
            <person name="Takemoto M."/>
            <person name="Kawakami B."/>
            <person name="Yamazaki M."/>
            <person name="Watanabe K."/>
            <person name="Kumagai A."/>
            <person name="Itakura S."/>
            <person name="Fukuzumi Y."/>
            <person name="Fujimori Y."/>
            <person name="Komiyama M."/>
            <person name="Tashiro H."/>
            <person name="Tanigami A."/>
            <person name="Fujiwara T."/>
            <person name="Ono T."/>
            <person name="Yamada K."/>
            <person name="Fujii Y."/>
            <person name="Ozaki K."/>
            <person name="Hirao M."/>
            <person name="Ohmori Y."/>
            <person name="Kawabata A."/>
            <person name="Hikiji T."/>
            <person name="Kobatake N."/>
            <person name="Inagaki H."/>
            <person name="Ikema Y."/>
            <person name="Okamoto S."/>
            <person name="Okitani R."/>
            <person name="Kawakami T."/>
            <person name="Noguchi S."/>
            <person name="Itoh T."/>
            <person name="Shigeta K."/>
            <person name="Senba T."/>
            <person name="Matsumura K."/>
            <person name="Nakajima Y."/>
            <person name="Mizuno T."/>
            <person name="Morinaga M."/>
            <person name="Sasaki M."/>
            <person name="Togashi T."/>
            <person name="Oyama M."/>
            <person name="Hata H."/>
            <person name="Watanabe M."/>
            <person name="Komatsu T."/>
            <person name="Mizushima-Sugano J."/>
            <person name="Satoh T."/>
            <person name="Shirai Y."/>
            <person name="Takahashi Y."/>
            <person name="Nakagawa K."/>
            <person name="Okumura K."/>
            <person name="Nagase T."/>
            <person name="Nomura N."/>
            <person name="Kikuchi H."/>
            <person name="Masuho Y."/>
            <person name="Yamashita R."/>
            <person name="Nakai K."/>
            <person name="Yada T."/>
            <person name="Nakamura Y."/>
            <person name="Ohara O."/>
            <person name="Isogai T."/>
            <person name="Sugano S."/>
        </authorList>
    </citation>
    <scope>NUCLEOTIDE SEQUENCE [LARGE SCALE MRNA] (ISOFORM 3)</scope>
</reference>
<reference key="4">
    <citation type="journal article" date="2003" name="Nature">
        <title>The DNA sequence and analysis of human chromosome 14.</title>
        <authorList>
            <person name="Heilig R."/>
            <person name="Eckenberg R."/>
            <person name="Petit J.-L."/>
            <person name="Fonknechten N."/>
            <person name="Da Silva C."/>
            <person name="Cattolico L."/>
            <person name="Levy M."/>
            <person name="Barbe V."/>
            <person name="De Berardinis V."/>
            <person name="Ureta-Vidal A."/>
            <person name="Pelletier E."/>
            <person name="Vico V."/>
            <person name="Anthouard V."/>
            <person name="Rowen L."/>
            <person name="Madan A."/>
            <person name="Qin S."/>
            <person name="Sun H."/>
            <person name="Du H."/>
            <person name="Pepin K."/>
            <person name="Artiguenave F."/>
            <person name="Robert C."/>
            <person name="Cruaud C."/>
            <person name="Bruels T."/>
            <person name="Jaillon O."/>
            <person name="Friedlander L."/>
            <person name="Samson G."/>
            <person name="Brottier P."/>
            <person name="Cure S."/>
            <person name="Segurens B."/>
            <person name="Aniere F."/>
            <person name="Samain S."/>
            <person name="Crespeau H."/>
            <person name="Abbasi N."/>
            <person name="Aiach N."/>
            <person name="Boscus D."/>
            <person name="Dickhoff R."/>
            <person name="Dors M."/>
            <person name="Dubois I."/>
            <person name="Friedman C."/>
            <person name="Gouyvenoux M."/>
            <person name="James R."/>
            <person name="Madan A."/>
            <person name="Mairey-Estrada B."/>
            <person name="Mangenot S."/>
            <person name="Martins N."/>
            <person name="Menard M."/>
            <person name="Oztas S."/>
            <person name="Ratcliffe A."/>
            <person name="Shaffer T."/>
            <person name="Trask B."/>
            <person name="Vacherie B."/>
            <person name="Bellemere C."/>
            <person name="Belser C."/>
            <person name="Besnard-Gonnet M."/>
            <person name="Bartol-Mavel D."/>
            <person name="Boutard M."/>
            <person name="Briez-Silla S."/>
            <person name="Combette S."/>
            <person name="Dufosse-Laurent V."/>
            <person name="Ferron C."/>
            <person name="Lechaplais C."/>
            <person name="Louesse C."/>
            <person name="Muselet D."/>
            <person name="Magdelenat G."/>
            <person name="Pateau E."/>
            <person name="Petit E."/>
            <person name="Sirvain-Trukniewicz P."/>
            <person name="Trybou A."/>
            <person name="Vega-Czarny N."/>
            <person name="Bataille E."/>
            <person name="Bluet E."/>
            <person name="Bordelais I."/>
            <person name="Dubois M."/>
            <person name="Dumont C."/>
            <person name="Guerin T."/>
            <person name="Haffray S."/>
            <person name="Hammadi R."/>
            <person name="Muanga J."/>
            <person name="Pellouin V."/>
            <person name="Robert D."/>
            <person name="Wunderle E."/>
            <person name="Gauguet G."/>
            <person name="Roy A."/>
            <person name="Sainte-Marthe L."/>
            <person name="Verdier J."/>
            <person name="Verdier-Discala C."/>
            <person name="Hillier L.W."/>
            <person name="Fulton L."/>
            <person name="McPherson J."/>
            <person name="Matsuda F."/>
            <person name="Wilson R."/>
            <person name="Scarpelli C."/>
            <person name="Gyapay G."/>
            <person name="Wincker P."/>
            <person name="Saurin W."/>
            <person name="Quetier F."/>
            <person name="Waterston R."/>
            <person name="Hood L."/>
            <person name="Weissenbach J."/>
        </authorList>
    </citation>
    <scope>NUCLEOTIDE SEQUENCE [LARGE SCALE GENOMIC DNA]</scope>
</reference>
<reference key="5">
    <citation type="submission" date="2005-07" db="EMBL/GenBank/DDBJ databases">
        <authorList>
            <person name="Mural R.J."/>
            <person name="Istrail S."/>
            <person name="Sutton G."/>
            <person name="Florea L."/>
            <person name="Halpern A.L."/>
            <person name="Mobarry C.M."/>
            <person name="Lippert R."/>
            <person name="Walenz B."/>
            <person name="Shatkay H."/>
            <person name="Dew I."/>
            <person name="Miller J.R."/>
            <person name="Flanigan M.J."/>
            <person name="Edwards N.J."/>
            <person name="Bolanos R."/>
            <person name="Fasulo D."/>
            <person name="Halldorsson B.V."/>
            <person name="Hannenhalli S."/>
            <person name="Turner R."/>
            <person name="Yooseph S."/>
            <person name="Lu F."/>
            <person name="Nusskern D.R."/>
            <person name="Shue B.C."/>
            <person name="Zheng X.H."/>
            <person name="Zhong F."/>
            <person name="Delcher A.L."/>
            <person name="Huson D.H."/>
            <person name="Kravitz S.A."/>
            <person name="Mouchard L."/>
            <person name="Reinert K."/>
            <person name="Remington K.A."/>
            <person name="Clark A.G."/>
            <person name="Waterman M.S."/>
            <person name="Eichler E.E."/>
            <person name="Adams M.D."/>
            <person name="Hunkapiller M.W."/>
            <person name="Myers E.W."/>
            <person name="Venter J.C."/>
        </authorList>
    </citation>
    <scope>NUCLEOTIDE SEQUENCE [LARGE SCALE GENOMIC DNA]</scope>
</reference>
<reference key="6">
    <citation type="journal article" date="2004" name="Genome Res.">
        <title>The status, quality, and expansion of the NIH full-length cDNA project: the Mammalian Gene Collection (MGC).</title>
        <authorList>
            <consortium name="The MGC Project Team"/>
        </authorList>
    </citation>
    <scope>NUCLEOTIDE SEQUENCE [LARGE SCALE MRNA] (ISOFORM 1)</scope>
    <scope>VARIANT THR-745</scope>
    <source>
        <tissue>PNS</tissue>
    </source>
</reference>
<reference key="7">
    <citation type="journal article" date="2008" name="Proteomics">
        <title>Proteomic analysis of ubiquitinated proteins in normal hepatocyte cell line Chang liver cells.</title>
        <authorList>
            <person name="Tan F."/>
            <person name="Lu L."/>
            <person name="Cai Y."/>
            <person name="Wang J."/>
            <person name="Xie Y."/>
            <person name="Wang L."/>
            <person name="Gong Y."/>
            <person name="Xu B.-E."/>
            <person name="Wu J."/>
            <person name="Luo Y."/>
            <person name="Qiang B."/>
            <person name="Yuan J."/>
            <person name="Sun X."/>
            <person name="Peng X."/>
        </authorList>
    </citation>
    <scope>UBIQUITINATION [LARGE SCALE ANALYSIS] AT LYS-785</scope>
    <scope>IDENTIFICATION BY MASS SPECTROMETRY</scope>
    <source>
        <tissue>Liver</tissue>
    </source>
</reference>
<reference key="8">
    <citation type="journal article" date="2013" name="Epilepsia">
        <title>Exome sequencing reveals new causal mutations in children with epileptic encephalopathies.</title>
        <authorList>
            <person name="Veeramah K.R."/>
            <person name="Johnstone L."/>
            <person name="Karafet T.M."/>
            <person name="Wolf D."/>
            <person name="Sprissler R."/>
            <person name="Salogiannis J."/>
            <person name="Barth-Maron A."/>
            <person name="Greenberg M.E."/>
            <person name="Stuhlmann T."/>
            <person name="Weinert S."/>
            <person name="Jentsch T.J."/>
            <person name="Pazzi M."/>
            <person name="Restifo L.L."/>
            <person name="Talwar D."/>
            <person name="Erickson R.P."/>
            <person name="Hammer M.F."/>
        </authorList>
    </citation>
    <scope>INVOLVEMENT IN DEE112</scope>
    <scope>VARIANT DEE112 HIS-327</scope>
</reference>
<reference evidence="22 23 24 25 26 27" key="9">
    <citation type="journal article" date="2023" name="Nat. Commun.">
        <title>Mechanism underlying delayed rectifying in human voltage-mediated activation Eag2 channel.</title>
        <authorList>
            <person name="Zhang M."/>
            <person name="Shan Y."/>
            <person name="Pei D."/>
        </authorList>
    </citation>
    <scope>STRUCTURE BY ELECTRON MICROSCOPY (3.40 ANGSTROMS) IN COMPLEX WITH POTASSIUM</scope>
    <scope>FUNCTION</scope>
    <scope>TRANSPORTER ACTIVITY</scope>
    <scope>SUBUNIT</scope>
    <scope>DOMAIN</scope>
    <scope>MUTAGENESIS OF LYS-337; THR-468 AND GLN-472</scope>
</reference>
<reference key="10">
    <citation type="journal article" date="2013" name="J. Neurosci.">
        <title>Multistate structural modeling and voltage-clamp analysis of epilepsy/autism mutation Kv10.2-R327H demonstrate the role of this residue in stabilizing the channel closed state.</title>
        <authorList>
            <person name="Yang Y."/>
            <person name="Vasylyev D.V."/>
            <person name="Dib-Hajj F."/>
            <person name="Veeramah K.R."/>
            <person name="Hammer M.F."/>
            <person name="Dib-Hajj S.D."/>
            <person name="Waxman S.G."/>
        </authorList>
    </citation>
    <scope>VARIANT DEE112 HIS-327</scope>
    <scope>CHARACTERIZATION OF VARIANT DEE112 HIS-327</scope>
    <scope>FUNCTION</scope>
    <scope>TRANSPORTER ACTIVITY</scope>
</reference>
<reference key="11">
    <citation type="journal article" date="2020" name="Clin. Genet.">
        <title>Whole-exome sequencing in adult patients with developmental and epileptic encephalopathy: It is never too late.</title>
        <authorList>
            <person name="Minardi R."/>
            <person name="Licchetta L."/>
            <person name="Baroni M.C."/>
            <person name="Pippucci T."/>
            <person name="Stipa C."/>
            <person name="Mostacci B."/>
            <person name="Severi G."/>
            <person name="Toni F."/>
            <person name="Bergonzini L."/>
            <person name="Carelli V."/>
            <person name="Seri M."/>
            <person name="Tinuper P."/>
            <person name="Bisulli F."/>
        </authorList>
    </citation>
    <scope>VARIANT DEE112 HIS-327</scope>
</reference>
<reference key="12">
    <citation type="journal article" date="2021" name="Front. Pediatr.">
        <title>Strategies in Rapid Genetic Diagnostics of Critically Ill Children: Experiences From a Dutch University Hospital.</title>
        <authorList>
            <person name="Imafidon M.E."/>
            <person name="Sikkema-Raddatz B."/>
            <person name="Abbott K.M."/>
            <person name="Meems-Veldhuis M.T."/>
            <person name="Swertz M.A."/>
            <person name="van der Velde K.J."/>
            <person name="Beunders G."/>
            <person name="Bos D.K."/>
            <person name="Knoers N.V.A.M."/>
            <person name="Kerstjens-Frederikse W.S."/>
            <person name="van Diemen C.C."/>
        </authorList>
    </citation>
    <scope>VARIANT DEE112 THR-463</scope>
</reference>
<reference key="13">
    <citation type="journal article" date="2022" name="Front. Pediatr.">
        <title>Clinical Feature, Treatment, and KCNH5 Mutations in Epilepsy.</title>
        <authorList>
            <person name="Hu X."/>
            <person name="Yang J."/>
            <person name="Zhang M."/>
            <person name="Fang T."/>
            <person name="Gao Q."/>
            <person name="Liu X."/>
        </authorList>
    </citation>
    <scope>VARIANTS DEE112 ASN-321 AND HIS-327</scope>
</reference>
<reference key="14">
    <citation type="journal article" date="2023" name="Neurology">
        <title>Neurodevelopmental and Epilepsy Phenotypes in Individuals With Missense Variants in the Voltage-Sensing and Pore Domains of KCNH5.</title>
        <authorList>
            <person name="Happ H.C."/>
            <person name="Sadleir L.G."/>
            <person name="Zemel M."/>
            <person name="de Valles-Ibanez G."/>
            <person name="Hildebrand M.S."/>
            <person name="McConkie-Rosell A."/>
            <person name="McDonald M."/>
            <person name="May H."/>
            <person name="Sands T."/>
            <person name="Aggarwal V."/>
            <person name="Elder C."/>
            <person name="Feyma T."/>
            <person name="Bayat A."/>
            <person name="Moeller R.S."/>
            <person name="Fenger C.D."/>
            <person name="Klint Nielsen J.E."/>
            <person name="Datta A.N."/>
            <person name="Gorman K.M."/>
            <person name="King M.D."/>
            <person name="Linhares N.D."/>
            <person name="Burton B.K."/>
            <person name="Paras A."/>
            <person name="Ellard S."/>
            <person name="Rankin J."/>
            <person name="Shukla A."/>
            <person name="Majethia P."/>
            <person name="Olson R.J."/>
            <person name="Muthusamy K."/>
            <person name="Schimmenti L.A."/>
            <person name="Starnes K."/>
            <person name="Sedlackova L."/>
            <person name="Sterbova K."/>
            <person name="Vlckova M."/>
            <person name="Lassuthova P."/>
            <person name="Jahodova A."/>
            <person name="Porter B.E."/>
            <person name="Couque N."/>
            <person name="Colin E."/>
            <person name="Prouteau C."/>
            <person name="Collet C."/>
            <person name="Smol T."/>
            <person name="Caumes R."/>
            <person name="Vansenne F."/>
            <person name="Bisulli F."/>
            <person name="Licchetta L."/>
            <person name="Person R."/>
            <person name="Torti E."/>
            <person name="McWalter K."/>
            <person name="Webster R."/>
            <person name="Gerard E.E."/>
            <person name="Lesca G."/>
            <person name="Szepetowski P."/>
            <person name="Scheffer I.E."/>
            <person name="Mefford H.C."/>
            <person name="Carvill G.L."/>
        </authorList>
    </citation>
    <scope>VARIANTS DEE112 GLU-324; HIS-327; HIS-333; PRO-468 AND SER-471</scope>
</reference>
<proteinExistence type="evidence at protein level"/>
<keyword id="KW-0002">3D-structure</keyword>
<keyword id="KW-0025">Alternative splicing</keyword>
<keyword id="KW-0112">Calmodulin-binding</keyword>
<keyword id="KW-0225">Disease variant</keyword>
<keyword id="KW-0887">Epilepsy</keyword>
<keyword id="KW-0325">Glycoprotein</keyword>
<keyword id="KW-0991">Intellectual disability</keyword>
<keyword id="KW-0407">Ion channel</keyword>
<keyword id="KW-0406">Ion transport</keyword>
<keyword id="KW-1017">Isopeptide bond</keyword>
<keyword id="KW-0472">Membrane</keyword>
<keyword id="KW-0597">Phosphoprotein</keyword>
<keyword id="KW-0630">Potassium</keyword>
<keyword id="KW-0631">Potassium channel</keyword>
<keyword id="KW-0633">Potassium transport</keyword>
<keyword id="KW-1267">Proteomics identification</keyword>
<keyword id="KW-1185">Reference proteome</keyword>
<keyword id="KW-0812">Transmembrane</keyword>
<keyword id="KW-1133">Transmembrane helix</keyword>
<keyword id="KW-0813">Transport</keyword>
<keyword id="KW-0832">Ubl conjugation</keyword>
<keyword id="KW-0851">Voltage-gated channel</keyword>
<organism>
    <name type="scientific">Homo sapiens</name>
    <name type="common">Human</name>
    <dbReference type="NCBI Taxonomy" id="9606"/>
    <lineage>
        <taxon>Eukaryota</taxon>
        <taxon>Metazoa</taxon>
        <taxon>Chordata</taxon>
        <taxon>Craniata</taxon>
        <taxon>Vertebrata</taxon>
        <taxon>Euteleostomi</taxon>
        <taxon>Mammalia</taxon>
        <taxon>Eutheria</taxon>
        <taxon>Euarchontoglires</taxon>
        <taxon>Primates</taxon>
        <taxon>Haplorrhini</taxon>
        <taxon>Catarrhini</taxon>
        <taxon>Hominidae</taxon>
        <taxon>Homo</taxon>
    </lineage>
</organism>
<gene>
    <name evidence="21" type="primary">KCNH5</name>
    <name evidence="17" type="synonym">EAG2</name>
</gene>
<evidence type="ECO:0000250" key="1"/>
<evidence type="ECO:0000250" key="2">
    <source>
        <dbReference type="UniProtKB" id="Q920E3"/>
    </source>
</evidence>
<evidence type="ECO:0000255" key="3"/>
<evidence type="ECO:0000255" key="4">
    <source>
        <dbReference type="PROSITE-ProRule" id="PRU00141"/>
    </source>
</evidence>
<evidence type="ECO:0000256" key="5">
    <source>
        <dbReference type="SAM" id="MobiDB-lite"/>
    </source>
</evidence>
<evidence type="ECO:0000269" key="6">
    <source>
    </source>
</evidence>
<evidence type="ECO:0000269" key="7">
    <source>
    </source>
</evidence>
<evidence type="ECO:0000269" key="8">
    <source>
    </source>
</evidence>
<evidence type="ECO:0000269" key="9">
    <source>
    </source>
</evidence>
<evidence type="ECO:0000269" key="10">
    <source>
    </source>
</evidence>
<evidence type="ECO:0000269" key="11">
    <source>
    </source>
</evidence>
<evidence type="ECO:0000269" key="12">
    <source>
    </source>
</evidence>
<evidence type="ECO:0000269" key="13">
    <source>
    </source>
</evidence>
<evidence type="ECO:0000269" key="14">
    <source>
    </source>
</evidence>
<evidence type="ECO:0000269" key="15">
    <source>
    </source>
</evidence>
<evidence type="ECO:0000269" key="16">
    <source>
    </source>
</evidence>
<evidence type="ECO:0000303" key="17">
    <source>
    </source>
</evidence>
<evidence type="ECO:0000303" key="18">
    <source>
    </source>
</evidence>
<evidence type="ECO:0000303" key="19">
    <source>
    </source>
</evidence>
<evidence type="ECO:0000305" key="20"/>
<evidence type="ECO:0000312" key="21">
    <source>
        <dbReference type="HGNC" id="HGNC:6254"/>
    </source>
</evidence>
<evidence type="ECO:0007744" key="22">
    <source>
        <dbReference type="PDB" id="7YID"/>
    </source>
</evidence>
<evidence type="ECO:0007744" key="23">
    <source>
        <dbReference type="PDB" id="7YIE"/>
    </source>
</evidence>
<evidence type="ECO:0007744" key="24">
    <source>
        <dbReference type="PDB" id="7YIF"/>
    </source>
</evidence>
<evidence type="ECO:0007744" key="25">
    <source>
        <dbReference type="PDB" id="7YIG"/>
    </source>
</evidence>
<evidence type="ECO:0007744" key="26">
    <source>
        <dbReference type="PDB" id="7YIH"/>
    </source>
</evidence>
<evidence type="ECO:0007744" key="27">
    <source>
        <dbReference type="PDB" id="7YIJ"/>
    </source>
</evidence>
<evidence type="ECO:0007829" key="28">
    <source>
        <dbReference type="PDB" id="7YID"/>
    </source>
</evidence>
<evidence type="ECO:0007829" key="29">
    <source>
        <dbReference type="PDB" id="7YIE"/>
    </source>
</evidence>
<evidence type="ECO:0007829" key="30">
    <source>
        <dbReference type="PDB" id="7YIF"/>
    </source>
</evidence>
<evidence type="ECO:0007829" key="31">
    <source>
        <dbReference type="PDB" id="7YIH"/>
    </source>
</evidence>